<keyword id="KW-0238">DNA-binding</keyword>
<keyword id="KW-1017">Isopeptide bond</keyword>
<keyword id="KW-0479">Metal-binding</keyword>
<keyword id="KW-0539">Nucleus</keyword>
<keyword id="KW-0597">Phosphoprotein</keyword>
<keyword id="KW-1185">Reference proteome</keyword>
<keyword id="KW-0677">Repeat</keyword>
<keyword id="KW-0678">Repressor</keyword>
<keyword id="KW-0804">Transcription</keyword>
<keyword id="KW-0805">Transcription regulation</keyword>
<keyword id="KW-0832">Ubl conjugation</keyword>
<keyword id="KW-0862">Zinc</keyword>
<keyword id="KW-0863">Zinc-finger</keyword>
<name>ZNF24_MOUSE</name>
<organism>
    <name type="scientific">Mus musculus</name>
    <name type="common">Mouse</name>
    <dbReference type="NCBI Taxonomy" id="10090"/>
    <lineage>
        <taxon>Eukaryota</taxon>
        <taxon>Metazoa</taxon>
        <taxon>Chordata</taxon>
        <taxon>Craniata</taxon>
        <taxon>Vertebrata</taxon>
        <taxon>Euteleostomi</taxon>
        <taxon>Mammalia</taxon>
        <taxon>Eutheria</taxon>
        <taxon>Euarchontoglires</taxon>
        <taxon>Glires</taxon>
        <taxon>Rodentia</taxon>
        <taxon>Myomorpha</taxon>
        <taxon>Muroidea</taxon>
        <taxon>Muridae</taxon>
        <taxon>Murinae</taxon>
        <taxon>Mus</taxon>
        <taxon>Mus</taxon>
    </lineage>
</organism>
<gene>
    <name evidence="2" type="primary">Znf24</name>
    <name evidence="11" type="synonym">Hmcns</name>
    <name evidence="2" type="synonym">Zfp191</name>
    <name evidence="13" type="synonym">Zfp24</name>
</gene>
<comment type="function">
    <text evidence="8 9">Transcription factor required for myelination of differentiated oligodendrocytes. Required for the conversion of oligodendrocytes from the premyelinating to the myelinating state. In the developing central nervous system (CNS), involved in the maintenance in the progenitor stage by promoting the cell cycle. Specifically binds to the 5'-TCAT-3' DNA sequence. Has transcription repressor activity in vitro.</text>
</comment>
<comment type="subcellular location">
    <subcellularLocation>
        <location evidence="4 9">Nucleus</location>
    </subcellularLocation>
</comment>
<comment type="tissue specificity">
    <text evidence="5 9">Widely expressed with highest levels in heart, brain, liver, skeletal muscle, kidney and testis and very low levels in spleen and lung.</text>
</comment>
<comment type="developmental stage">
    <text evidence="5 7">In the embryo, barely detectable at day 17, peaks at day 11 and remains constant thereafter. Detected early during embryogenesis in ectodermal, endodermal, mesodermal and extraembryonic tissues. Expressed in the developing central nervous system. In the developing central nervous system (CNS), mainly expressed in progenitors.</text>
</comment>
<comment type="PTM">
    <text evidence="1">Sumoylated.</text>
</comment>
<comment type="disruption phenotype">
    <text evidence="6 9">According to PubMed:20080941, most mice die by postnatal day 25 (P25) due to myelination defects. Brains and spinal cords isolated from P14 mice appear to be smaller than those from wild-type mice and to lack white matter. Mutant oligodendrocytes arrest at a late stage of differentiation. Expression of genes expressed specifically in mature myelinating oligodendrocytes is down-regulated. According to PubMed:17064688, embryos are severely retarded in development and die at approximately 7.5 dpc. One possible explanation for the different phenotypes described is that the two null alleles are not identical. In the mutants described by PubMed:20080941, the PGK-neo cassette used for positive selection of embryonic stem (ES) cells has been removed, whereas it remains in the allele described by PubMed:17064688.</text>
</comment>
<comment type="similarity">
    <text evidence="12">Belongs to the krueppel C2H2-type zinc-finger protein family.</text>
</comment>
<protein>
    <recommendedName>
        <fullName evidence="13">Zinc finger protein 24</fullName>
    </recommendedName>
    <alternativeName>
        <fullName evidence="11">Hypomyelinated CNS protein</fullName>
    </alternativeName>
    <alternativeName>
        <fullName evidence="2">Zinc finger protein 191</fullName>
    </alternativeName>
    <alternativeName>
        <fullName evidence="10">Zinc finger protein ZF-12</fullName>
    </alternativeName>
</protein>
<proteinExistence type="evidence at protein level"/>
<evidence type="ECO:0000250" key="1"/>
<evidence type="ECO:0000250" key="2">
    <source>
        <dbReference type="UniProtKB" id="P17028"/>
    </source>
</evidence>
<evidence type="ECO:0000255" key="3">
    <source>
        <dbReference type="PROSITE-ProRule" id="PRU00042"/>
    </source>
</evidence>
<evidence type="ECO:0000255" key="4">
    <source>
        <dbReference type="PROSITE-ProRule" id="PRU00187"/>
    </source>
</evidence>
<evidence type="ECO:0000269" key="5">
    <source>
    </source>
</evidence>
<evidence type="ECO:0000269" key="6">
    <source>
    </source>
</evidence>
<evidence type="ECO:0000269" key="7">
    <source>
    </source>
</evidence>
<evidence type="ECO:0000269" key="8">
    <source>
    </source>
</evidence>
<evidence type="ECO:0000269" key="9">
    <source>
    </source>
</evidence>
<evidence type="ECO:0000303" key="10">
    <source>
    </source>
</evidence>
<evidence type="ECO:0000303" key="11">
    <source>
    </source>
</evidence>
<evidence type="ECO:0000305" key="12"/>
<evidence type="ECO:0000312" key="13">
    <source>
        <dbReference type="MGI" id="MGI:1929704"/>
    </source>
</evidence>
<reference key="1">
    <citation type="journal article" date="1999" name="Biochim. Biophys. Acta">
        <title>Isolation, cloning, and expression of a new murine zinc finger encoding gene.</title>
        <authorList>
            <person name="Prost J.-P."/>
            <person name="Negre D."/>
            <person name="Cornet-Javaux F."/>
            <person name="Cortay J.-C."/>
            <person name="Cozzone A.J."/>
            <person name="Herbage D."/>
            <person name="Mallein-Gerin F."/>
        </authorList>
    </citation>
    <scope>NUCLEOTIDE SEQUENCE [MRNA]</scope>
    <scope>TISSUE SPECIFICITY</scope>
    <scope>DEVELOPMENTAL STAGE</scope>
    <source>
        <strain>CD-1</strain>
        <tissue>Cartilage chondrocyte</tissue>
    </source>
</reference>
<reference key="2">
    <citation type="journal article" date="2003" name="Yi Chuan Xue Bao">
        <title>Cloning, genomic organization and promoter activity of the mouse zinc finger protein gene ZF-12.</title>
        <authorList>
            <person name="Li J.-Z."/>
            <person name="Chen X."/>
            <person name="Wang S.L."/>
            <person name="Sun X."/>
            <person name="Zhang Y.Z."/>
            <person name="Yu L."/>
            <person name="Fu J.-L."/>
        </authorList>
    </citation>
    <scope>NUCLEOTIDE SEQUENCE [GENOMIC DNA]</scope>
    <source>
        <strain>129/SvJ</strain>
    </source>
</reference>
<reference key="3">
    <citation type="journal article" date="2005" name="Science">
        <title>The transcriptional landscape of the mammalian genome.</title>
        <authorList>
            <person name="Carninci P."/>
            <person name="Kasukawa T."/>
            <person name="Katayama S."/>
            <person name="Gough J."/>
            <person name="Frith M.C."/>
            <person name="Maeda N."/>
            <person name="Oyama R."/>
            <person name="Ravasi T."/>
            <person name="Lenhard B."/>
            <person name="Wells C."/>
            <person name="Kodzius R."/>
            <person name="Shimokawa K."/>
            <person name="Bajic V.B."/>
            <person name="Brenner S.E."/>
            <person name="Batalov S."/>
            <person name="Forrest A.R."/>
            <person name="Zavolan M."/>
            <person name="Davis M.J."/>
            <person name="Wilming L.G."/>
            <person name="Aidinis V."/>
            <person name="Allen J.E."/>
            <person name="Ambesi-Impiombato A."/>
            <person name="Apweiler R."/>
            <person name="Aturaliya R.N."/>
            <person name="Bailey T.L."/>
            <person name="Bansal M."/>
            <person name="Baxter L."/>
            <person name="Beisel K.W."/>
            <person name="Bersano T."/>
            <person name="Bono H."/>
            <person name="Chalk A.M."/>
            <person name="Chiu K.P."/>
            <person name="Choudhary V."/>
            <person name="Christoffels A."/>
            <person name="Clutterbuck D.R."/>
            <person name="Crowe M.L."/>
            <person name="Dalla E."/>
            <person name="Dalrymple B.P."/>
            <person name="de Bono B."/>
            <person name="Della Gatta G."/>
            <person name="di Bernardo D."/>
            <person name="Down T."/>
            <person name="Engstrom P."/>
            <person name="Fagiolini M."/>
            <person name="Faulkner G."/>
            <person name="Fletcher C.F."/>
            <person name="Fukushima T."/>
            <person name="Furuno M."/>
            <person name="Futaki S."/>
            <person name="Gariboldi M."/>
            <person name="Georgii-Hemming P."/>
            <person name="Gingeras T.R."/>
            <person name="Gojobori T."/>
            <person name="Green R.E."/>
            <person name="Gustincich S."/>
            <person name="Harbers M."/>
            <person name="Hayashi Y."/>
            <person name="Hensch T.K."/>
            <person name="Hirokawa N."/>
            <person name="Hill D."/>
            <person name="Huminiecki L."/>
            <person name="Iacono M."/>
            <person name="Ikeo K."/>
            <person name="Iwama A."/>
            <person name="Ishikawa T."/>
            <person name="Jakt M."/>
            <person name="Kanapin A."/>
            <person name="Katoh M."/>
            <person name="Kawasawa Y."/>
            <person name="Kelso J."/>
            <person name="Kitamura H."/>
            <person name="Kitano H."/>
            <person name="Kollias G."/>
            <person name="Krishnan S.P."/>
            <person name="Kruger A."/>
            <person name="Kummerfeld S.K."/>
            <person name="Kurochkin I.V."/>
            <person name="Lareau L.F."/>
            <person name="Lazarevic D."/>
            <person name="Lipovich L."/>
            <person name="Liu J."/>
            <person name="Liuni S."/>
            <person name="McWilliam S."/>
            <person name="Madan Babu M."/>
            <person name="Madera M."/>
            <person name="Marchionni L."/>
            <person name="Matsuda H."/>
            <person name="Matsuzawa S."/>
            <person name="Miki H."/>
            <person name="Mignone F."/>
            <person name="Miyake S."/>
            <person name="Morris K."/>
            <person name="Mottagui-Tabar S."/>
            <person name="Mulder N."/>
            <person name="Nakano N."/>
            <person name="Nakauchi H."/>
            <person name="Ng P."/>
            <person name="Nilsson R."/>
            <person name="Nishiguchi S."/>
            <person name="Nishikawa S."/>
            <person name="Nori F."/>
            <person name="Ohara O."/>
            <person name="Okazaki Y."/>
            <person name="Orlando V."/>
            <person name="Pang K.C."/>
            <person name="Pavan W.J."/>
            <person name="Pavesi G."/>
            <person name="Pesole G."/>
            <person name="Petrovsky N."/>
            <person name="Piazza S."/>
            <person name="Reed J."/>
            <person name="Reid J.F."/>
            <person name="Ring B.Z."/>
            <person name="Ringwald M."/>
            <person name="Rost B."/>
            <person name="Ruan Y."/>
            <person name="Salzberg S.L."/>
            <person name="Sandelin A."/>
            <person name="Schneider C."/>
            <person name="Schoenbach C."/>
            <person name="Sekiguchi K."/>
            <person name="Semple C.A."/>
            <person name="Seno S."/>
            <person name="Sessa L."/>
            <person name="Sheng Y."/>
            <person name="Shibata Y."/>
            <person name="Shimada H."/>
            <person name="Shimada K."/>
            <person name="Silva D."/>
            <person name="Sinclair B."/>
            <person name="Sperling S."/>
            <person name="Stupka E."/>
            <person name="Sugiura K."/>
            <person name="Sultana R."/>
            <person name="Takenaka Y."/>
            <person name="Taki K."/>
            <person name="Tammoja K."/>
            <person name="Tan S.L."/>
            <person name="Tang S."/>
            <person name="Taylor M.S."/>
            <person name="Tegner J."/>
            <person name="Teichmann S.A."/>
            <person name="Ueda H.R."/>
            <person name="van Nimwegen E."/>
            <person name="Verardo R."/>
            <person name="Wei C.L."/>
            <person name="Yagi K."/>
            <person name="Yamanishi H."/>
            <person name="Zabarovsky E."/>
            <person name="Zhu S."/>
            <person name="Zimmer A."/>
            <person name="Hide W."/>
            <person name="Bult C."/>
            <person name="Grimmond S.M."/>
            <person name="Teasdale R.D."/>
            <person name="Liu E.T."/>
            <person name="Brusic V."/>
            <person name="Quackenbush J."/>
            <person name="Wahlestedt C."/>
            <person name="Mattick J.S."/>
            <person name="Hume D.A."/>
            <person name="Kai C."/>
            <person name="Sasaki D."/>
            <person name="Tomaru Y."/>
            <person name="Fukuda S."/>
            <person name="Kanamori-Katayama M."/>
            <person name="Suzuki M."/>
            <person name="Aoki J."/>
            <person name="Arakawa T."/>
            <person name="Iida J."/>
            <person name="Imamura K."/>
            <person name="Itoh M."/>
            <person name="Kato T."/>
            <person name="Kawaji H."/>
            <person name="Kawagashira N."/>
            <person name="Kawashima T."/>
            <person name="Kojima M."/>
            <person name="Kondo S."/>
            <person name="Konno H."/>
            <person name="Nakano K."/>
            <person name="Ninomiya N."/>
            <person name="Nishio T."/>
            <person name="Okada M."/>
            <person name="Plessy C."/>
            <person name="Shibata K."/>
            <person name="Shiraki T."/>
            <person name="Suzuki S."/>
            <person name="Tagami M."/>
            <person name="Waki K."/>
            <person name="Watahiki A."/>
            <person name="Okamura-Oho Y."/>
            <person name="Suzuki H."/>
            <person name="Kawai J."/>
            <person name="Hayashizaki Y."/>
        </authorList>
    </citation>
    <scope>NUCLEOTIDE SEQUENCE [LARGE SCALE MRNA]</scope>
    <source>
        <strain>C57BL/6J</strain>
        <tissue>Heart</tissue>
    </source>
</reference>
<reference key="4">
    <citation type="submission" date="2005-07" db="EMBL/GenBank/DDBJ databases">
        <authorList>
            <person name="Mural R.J."/>
            <person name="Adams M.D."/>
            <person name="Myers E.W."/>
            <person name="Smith H.O."/>
            <person name="Venter J.C."/>
        </authorList>
    </citation>
    <scope>NUCLEOTIDE SEQUENCE [LARGE SCALE GENOMIC DNA]</scope>
</reference>
<reference key="5">
    <citation type="journal article" date="2004" name="Genome Res.">
        <title>The status, quality, and expansion of the NIH full-length cDNA project: the Mammalian Gene Collection (MGC).</title>
        <authorList>
            <consortium name="The MGC Project Team"/>
        </authorList>
    </citation>
    <scope>NUCLEOTIDE SEQUENCE [LARGE SCALE MRNA]</scope>
    <source>
        <tissue>Mammary gland</tissue>
        <tissue>Retina</tissue>
    </source>
</reference>
<reference key="6">
    <citation type="journal article" date="2006" name="Exp. Cell Res.">
        <title>The zinc finger transcription factor 191 is required for early embryonic development and cell proliferation.</title>
        <authorList>
            <person name="Li J."/>
            <person name="Chen X."/>
            <person name="Yang H."/>
            <person name="Wang S."/>
            <person name="Guo B."/>
            <person name="Yu L."/>
            <person name="Wang Z."/>
            <person name="Fu J."/>
        </authorList>
    </citation>
    <scope>DISRUPTION PHENOTYPE</scope>
</reference>
<reference key="7">
    <citation type="journal article" date="2008" name="Acta Biochim. Biophys. Sin.">
        <title>Characterization of the target DNA sequence for the DNA-binding domain of zinc finger protein 191.</title>
        <authorList>
            <person name="Wang H."/>
            <person name="Sun R."/>
            <person name="Liu G."/>
            <person name="Yao M."/>
            <person name="Fei J."/>
            <person name="Shen H."/>
        </authorList>
    </citation>
    <scope>DNA-BINDING</scope>
</reference>
<reference key="8">
    <citation type="journal article" date="2008" name="Gene Expr. Patterns">
        <title>Expression of the transcription factor Zfp191 during embryonic development in the mouse.</title>
        <authorList>
            <person name="Khalfallah O."/>
            <person name="Faucon-Biguet N."/>
            <person name="Nardelli J."/>
            <person name="Meloni R."/>
            <person name="Mallet J."/>
        </authorList>
    </citation>
    <scope>DEVELOPMENTAL STAGE</scope>
</reference>
<reference key="9">
    <citation type="journal article" date="2009" name="Stem Cells">
        <title>Zinc finger protein 191 (ZNF191/Zfp191) is necessary to maintain neural cells as cycling progenitors.</title>
        <authorList>
            <person name="Khalfallah O."/>
            <person name="Ravassard P."/>
            <person name="Lagache C.S."/>
            <person name="Fligny C."/>
            <person name="Serre A."/>
            <person name="Bayard E."/>
            <person name="Faucon-Biguet N."/>
            <person name="Mallet J."/>
            <person name="Meloni R."/>
            <person name="Nardelli J."/>
        </authorList>
    </citation>
    <scope>FUNCTION</scope>
</reference>
<reference key="10">
    <citation type="journal article" date="2010" name="Genes Dev.">
        <title>ZFP191 is required by oligodendrocytes for CNS myelination.</title>
        <authorList>
            <person name="Howng S.Y."/>
            <person name="Avila R.L."/>
            <person name="Emery B."/>
            <person name="Traka M."/>
            <person name="Lin W."/>
            <person name="Watkins T."/>
            <person name="Cook S."/>
            <person name="Bronson R."/>
            <person name="Davisson M."/>
            <person name="Barres B.A."/>
            <person name="Popko B."/>
        </authorList>
    </citation>
    <scope>FUNCTION</scope>
    <scope>SUBCELLULAR LOCATION</scope>
    <scope>TISSUE SPECIFICITY</scope>
    <scope>DISRUPTION PHENOTYPE</scope>
</reference>
<feature type="chain" id="PRO_0000047353" description="Zinc finger protein 24">
    <location>
        <begin position="1"/>
        <end position="368"/>
    </location>
</feature>
<feature type="domain" description="SCAN box" evidence="4">
    <location>
        <begin position="52"/>
        <end position="134"/>
    </location>
</feature>
<feature type="zinc finger region" description="C2H2-type 1" evidence="3">
    <location>
        <begin position="251"/>
        <end position="273"/>
    </location>
</feature>
<feature type="zinc finger region" description="C2H2-type 2" evidence="3">
    <location>
        <begin position="279"/>
        <end position="301"/>
    </location>
</feature>
<feature type="zinc finger region" description="C2H2-type 3" evidence="3">
    <location>
        <begin position="307"/>
        <end position="329"/>
    </location>
</feature>
<feature type="zinc finger region" description="C2H2-type 4" evidence="3">
    <location>
        <begin position="335"/>
        <end position="357"/>
    </location>
</feature>
<feature type="region of interest" description="Necessary and sufficient for nuclear localization" evidence="1">
    <location>
        <begin position="251"/>
        <end position="301"/>
    </location>
</feature>
<feature type="modified residue" description="Phosphoserine" evidence="2">
    <location>
        <position position="132"/>
    </location>
</feature>
<feature type="modified residue" description="Phosphoserine" evidence="2">
    <location>
        <position position="142"/>
    </location>
</feature>
<feature type="modified residue" description="Phosphoserine" evidence="2">
    <location>
        <position position="274"/>
    </location>
</feature>
<feature type="modified residue" description="Phosphoserine" evidence="2">
    <location>
        <position position="292"/>
    </location>
</feature>
<feature type="modified residue" description="Phosphotyrosine" evidence="2">
    <location>
        <position position="335"/>
    </location>
</feature>
<feature type="cross-link" description="Glycyl lysine isopeptide (Lys-Gly) (interchain with G-Cter in SUMO2)" evidence="2">
    <location>
        <position position="22"/>
    </location>
</feature>
<feature type="cross-link" description="Glycyl lysine isopeptide (Lys-Gly) (interchain with G-Cter in SUMO1); alternate" evidence="2">
    <location>
        <position position="27"/>
    </location>
</feature>
<feature type="cross-link" description="Glycyl lysine isopeptide (Lys-Gly) (interchain with G-Cter in SUMO2); alternate" evidence="2">
    <location>
        <position position="27"/>
    </location>
</feature>
<feature type="cross-link" description="Glycyl lysine isopeptide (Lys-Gly) (interchain with G-Cter in SUMO2)" evidence="2">
    <location>
        <position position="147"/>
    </location>
</feature>
<feature type="cross-link" description="Glycyl lysine isopeptide (Lys-Gly) (interchain with G-Cter in SUMO2)" evidence="2">
    <location>
        <position position="177"/>
    </location>
</feature>
<feature type="cross-link" description="Glycyl lysine isopeptide (Lys-Gly) (interchain with G-Cter in SUMO2)" evidence="2">
    <location>
        <position position="236"/>
    </location>
</feature>
<feature type="cross-link" description="Glycyl lysine isopeptide (Lys-Gly) (interchain with G-Cter in SUMO2)" evidence="2">
    <location>
        <position position="277"/>
    </location>
</feature>
<feature type="cross-link" description="Glycyl lysine isopeptide (Lys-Gly) (interchain with G-Cter in SUMO2)" evidence="2">
    <location>
        <position position="286"/>
    </location>
</feature>
<feature type="cross-link" description="Glycyl lysine isopeptide (Lys-Gly) (interchain with G-Cter in SUMO2)" evidence="2">
    <location>
        <position position="361"/>
    </location>
</feature>
<feature type="cross-link" description="Glycyl lysine isopeptide (Lys-Gly) (interchain with G-Cter in SUMO2)" evidence="2">
    <location>
        <position position="367"/>
    </location>
</feature>
<feature type="sequence conflict" description="In Ref. 1; AAD37421." evidence="12" ref="1">
    <original>I</original>
    <variation>M</variation>
    <location>
        <position position="91"/>
    </location>
</feature>
<feature type="sequence conflict" description="In Ref. 1; AAD37421." evidence="12" ref="1">
    <location>
        <position position="366"/>
    </location>
</feature>
<sequence>MSAQSVEEDSILIIPNPDEEEKILRVKLEEDPDGEEGSSISWNHLPDPEVFRQRFRQFGYQDSPGPREAVSQLRELCRLWLRPETHTKEQILELVVLEQFVAILPKELQTWVREHHPENGEEAVAVLEDLESELDDPGQPVSLRRQKREVLVEEITSQEDAQGLPSSELDAVENQLKWASWELHSLRHCDDDATTENGALAPKQEMASAGESHEGPGTLNIGVPQLFKYGETCFPKGRFERKRNPSRKKQHICDECGKHFSQGSALILHQRIHSGEKPYGCVECGKAFSRSSILVQHQRVHTGEKPYKCLECGKAFSQNSGLINHQRIHTGEKPYECVQCGKSYSQSSNLFRHQRRHNAEKLLNVVKV</sequence>
<accession>Q91VN1</accession>
<accession>Q5MDG8</accession>
<accession>Q9WUQ0</accession>
<dbReference type="EMBL" id="AF149093">
    <property type="protein sequence ID" value="AAD37421.1"/>
    <property type="molecule type" value="mRNA"/>
</dbReference>
<dbReference type="EMBL" id="AY052495">
    <property type="protein sequence ID" value="AAL13429.1"/>
    <property type="molecule type" value="Genomic_DNA"/>
</dbReference>
<dbReference type="EMBL" id="AY832930">
    <property type="protein sequence ID" value="AAV91152.1"/>
    <property type="molecule type" value="mRNA"/>
</dbReference>
<dbReference type="EMBL" id="AK146726">
    <property type="protein sequence ID" value="BAE27389.1"/>
    <property type="molecule type" value="mRNA"/>
</dbReference>
<dbReference type="EMBL" id="CH466557">
    <property type="protein sequence ID" value="EDK96990.1"/>
    <property type="molecule type" value="Genomic_DNA"/>
</dbReference>
<dbReference type="EMBL" id="CH466557">
    <property type="protein sequence ID" value="EDK96991.1"/>
    <property type="molecule type" value="Genomic_DNA"/>
</dbReference>
<dbReference type="EMBL" id="BC011345">
    <property type="protein sequence ID" value="AAH11345.1"/>
    <property type="molecule type" value="mRNA"/>
</dbReference>
<dbReference type="EMBL" id="BC054832">
    <property type="protein sequence ID" value="AAH54832.1"/>
    <property type="molecule type" value="mRNA"/>
</dbReference>
<dbReference type="CCDS" id="CCDS29098.1"/>
<dbReference type="RefSeq" id="NP_067534.2">
    <property type="nucleotide sequence ID" value="NM_021559.2"/>
</dbReference>
<dbReference type="RefSeq" id="XP_006526199.1">
    <property type="nucleotide sequence ID" value="XM_006526136.3"/>
</dbReference>
<dbReference type="RefSeq" id="XP_006526200.1">
    <property type="nucleotide sequence ID" value="XM_006526137.3"/>
</dbReference>
<dbReference type="SMR" id="Q91VN1"/>
<dbReference type="BioGRID" id="208519">
    <property type="interactions" value="24"/>
</dbReference>
<dbReference type="FunCoup" id="Q91VN1">
    <property type="interactions" value="2477"/>
</dbReference>
<dbReference type="IntAct" id="Q91VN1">
    <property type="interactions" value="2"/>
</dbReference>
<dbReference type="STRING" id="10090.ENSMUSP00000064637"/>
<dbReference type="iPTMnet" id="Q91VN1"/>
<dbReference type="PhosphoSitePlus" id="Q91VN1"/>
<dbReference type="SwissPalm" id="Q91VN1"/>
<dbReference type="PaxDb" id="10090-ENSMUSP00000064637"/>
<dbReference type="PeptideAtlas" id="Q91VN1"/>
<dbReference type="ProteomicsDB" id="275041"/>
<dbReference type="Pumba" id="Q91VN1"/>
<dbReference type="Antibodypedia" id="8576">
    <property type="antibodies" value="268 antibodies from 32 providers"/>
</dbReference>
<dbReference type="DNASU" id="59057"/>
<dbReference type="Ensembl" id="ENSMUST00000066497.12">
    <property type="protein sequence ID" value="ENSMUSP00000064637.6"/>
    <property type="gene ID" value="ENSMUSG00000051469.15"/>
</dbReference>
<dbReference type="Ensembl" id="ENSMUST00000153337.2">
    <property type="protein sequence ID" value="ENSMUSP00000122579.2"/>
    <property type="gene ID" value="ENSMUSG00000051469.15"/>
</dbReference>
<dbReference type="GeneID" id="59057"/>
<dbReference type="KEGG" id="mmu:59057"/>
<dbReference type="UCSC" id="uc008egm.1">
    <property type="organism name" value="mouse"/>
</dbReference>
<dbReference type="AGR" id="MGI:1929704"/>
<dbReference type="CTD" id="59057"/>
<dbReference type="MGI" id="MGI:1929704">
    <property type="gene designation" value="Zfp24"/>
</dbReference>
<dbReference type="VEuPathDB" id="HostDB:ENSMUSG00000051469"/>
<dbReference type="eggNOG" id="KOG1721">
    <property type="taxonomic scope" value="Eukaryota"/>
</dbReference>
<dbReference type="GeneTree" id="ENSGT00940000161396"/>
<dbReference type="HOGENOM" id="CLU_002678_49_3_1"/>
<dbReference type="InParanoid" id="Q91VN1"/>
<dbReference type="OMA" id="LWELCNL"/>
<dbReference type="OrthoDB" id="427030at2759"/>
<dbReference type="PhylomeDB" id="Q91VN1"/>
<dbReference type="TreeFam" id="TF338304"/>
<dbReference type="BioGRID-ORCS" id="59057">
    <property type="hits" value="2 hits in 43 CRISPR screens"/>
</dbReference>
<dbReference type="ChiTaRS" id="Zfp24">
    <property type="organism name" value="mouse"/>
</dbReference>
<dbReference type="PRO" id="PR:Q91VN1"/>
<dbReference type="Proteomes" id="UP000000589">
    <property type="component" value="Chromosome 18"/>
</dbReference>
<dbReference type="RNAct" id="Q91VN1">
    <property type="molecule type" value="protein"/>
</dbReference>
<dbReference type="Bgee" id="ENSMUSG00000051469">
    <property type="expression patterns" value="Expressed in medial ganglionic eminence and 309 other cell types or tissues"/>
</dbReference>
<dbReference type="ExpressionAtlas" id="Q91VN1">
    <property type="expression patterns" value="baseline and differential"/>
</dbReference>
<dbReference type="GO" id="GO:0005654">
    <property type="term" value="C:nucleoplasm"/>
    <property type="evidence" value="ECO:0007669"/>
    <property type="project" value="Ensembl"/>
</dbReference>
<dbReference type="GO" id="GO:0005634">
    <property type="term" value="C:nucleus"/>
    <property type="evidence" value="ECO:0000314"/>
    <property type="project" value="UniProtKB"/>
</dbReference>
<dbReference type="GO" id="GO:0001228">
    <property type="term" value="F:DNA-binding transcription activator activity, RNA polymerase II-specific"/>
    <property type="evidence" value="ECO:0007669"/>
    <property type="project" value="Ensembl"/>
</dbReference>
<dbReference type="GO" id="GO:0003700">
    <property type="term" value="F:DNA-binding transcription factor activity"/>
    <property type="evidence" value="ECO:0000304"/>
    <property type="project" value="UniProtKB"/>
</dbReference>
<dbReference type="GO" id="GO:0042802">
    <property type="term" value="F:identical protein binding"/>
    <property type="evidence" value="ECO:0007669"/>
    <property type="project" value="Ensembl"/>
</dbReference>
<dbReference type="GO" id="GO:0043565">
    <property type="term" value="F:sequence-specific DNA binding"/>
    <property type="evidence" value="ECO:0000314"/>
    <property type="project" value="UniProtKB"/>
</dbReference>
<dbReference type="GO" id="GO:0008270">
    <property type="term" value="F:zinc ion binding"/>
    <property type="evidence" value="ECO:0007669"/>
    <property type="project" value="UniProtKB-KW"/>
</dbReference>
<dbReference type="GO" id="GO:0042552">
    <property type="term" value="P:myelination"/>
    <property type="evidence" value="ECO:0000315"/>
    <property type="project" value="UniProtKB"/>
</dbReference>
<dbReference type="GO" id="GO:0045892">
    <property type="term" value="P:negative regulation of DNA-templated transcription"/>
    <property type="evidence" value="ECO:0007669"/>
    <property type="project" value="Ensembl"/>
</dbReference>
<dbReference type="CDD" id="cd07936">
    <property type="entry name" value="SCAN"/>
    <property type="match status" value="1"/>
</dbReference>
<dbReference type="FunFam" id="3.30.160.60:FF:000824">
    <property type="entry name" value="Zinc finger protein 184"/>
    <property type="match status" value="1"/>
</dbReference>
<dbReference type="FunFam" id="3.30.160.60:FF:000358">
    <property type="entry name" value="zinc finger protein 24"/>
    <property type="match status" value="1"/>
</dbReference>
<dbReference type="FunFam" id="3.30.160.60:FF:000632">
    <property type="entry name" value="zinc finger protein 24 isoform X1"/>
    <property type="match status" value="1"/>
</dbReference>
<dbReference type="FunFam" id="1.10.4020.10:FF:000001">
    <property type="entry name" value="zinc finger protein 263 isoform X1"/>
    <property type="match status" value="1"/>
</dbReference>
<dbReference type="FunFam" id="3.30.160.60:FF:000953">
    <property type="entry name" value="Zinc finger protein 691"/>
    <property type="match status" value="1"/>
</dbReference>
<dbReference type="Gene3D" id="3.30.160.60">
    <property type="entry name" value="Classic Zinc Finger"/>
    <property type="match status" value="4"/>
</dbReference>
<dbReference type="Gene3D" id="1.10.4020.10">
    <property type="entry name" value="DNA breaking-rejoining enzymes"/>
    <property type="match status" value="1"/>
</dbReference>
<dbReference type="InterPro" id="IPR003309">
    <property type="entry name" value="SCAN_dom"/>
</dbReference>
<dbReference type="InterPro" id="IPR038269">
    <property type="entry name" value="SCAN_sf"/>
</dbReference>
<dbReference type="InterPro" id="IPR036236">
    <property type="entry name" value="Znf_C2H2_sf"/>
</dbReference>
<dbReference type="InterPro" id="IPR013087">
    <property type="entry name" value="Znf_C2H2_type"/>
</dbReference>
<dbReference type="PANTHER" id="PTHR23235:SF178">
    <property type="entry name" value="C2H2-TYPE DOMAIN-CONTAINING PROTEIN-RELATED"/>
    <property type="match status" value="1"/>
</dbReference>
<dbReference type="PANTHER" id="PTHR23235">
    <property type="entry name" value="KRUEPPEL-LIKE TRANSCRIPTION FACTOR"/>
    <property type="match status" value="1"/>
</dbReference>
<dbReference type="Pfam" id="PF02023">
    <property type="entry name" value="SCAN"/>
    <property type="match status" value="1"/>
</dbReference>
<dbReference type="Pfam" id="PF00096">
    <property type="entry name" value="zf-C2H2"/>
    <property type="match status" value="4"/>
</dbReference>
<dbReference type="SMART" id="SM00431">
    <property type="entry name" value="SCAN"/>
    <property type="match status" value="1"/>
</dbReference>
<dbReference type="SMART" id="SM00355">
    <property type="entry name" value="ZnF_C2H2"/>
    <property type="match status" value="4"/>
</dbReference>
<dbReference type="SUPFAM" id="SSF57667">
    <property type="entry name" value="beta-beta-alpha zinc fingers"/>
    <property type="match status" value="3"/>
</dbReference>
<dbReference type="SUPFAM" id="SSF47353">
    <property type="entry name" value="Retrovirus capsid dimerization domain-like"/>
    <property type="match status" value="1"/>
</dbReference>
<dbReference type="PROSITE" id="PS50804">
    <property type="entry name" value="SCAN_BOX"/>
    <property type="match status" value="1"/>
</dbReference>
<dbReference type="PROSITE" id="PS00028">
    <property type="entry name" value="ZINC_FINGER_C2H2_1"/>
    <property type="match status" value="4"/>
</dbReference>
<dbReference type="PROSITE" id="PS50157">
    <property type="entry name" value="ZINC_FINGER_C2H2_2"/>
    <property type="match status" value="4"/>
</dbReference>